<comment type="function">
    <text evidence="1">One of the components of the core complex of photosystem II (PSII). PSII is a light-driven water:plastoquinone oxidoreductase that uses light energy to abstract electrons from H(2)O, generating O(2) and a proton gradient subsequently used for ATP formation. It consists of a core antenna complex that captures photons, and an electron transfer chain that converts photonic excitation into a charge separation. This subunit is found at the monomer-monomer interface and is required for correct PSII assembly and/or dimerization.</text>
</comment>
<comment type="subunit">
    <text evidence="1">PSII is composed of 1 copy each of membrane proteins PsbA, PsbB, PsbC, PsbD, PsbE, PsbF, PsbH, PsbI, PsbJ, PsbK, PsbL, PsbM, PsbT, PsbX, PsbY, PsbZ, Psb30/Ycf12, at least 3 peripheral proteins of the oxygen-evolving complex and a large number of cofactors. It forms dimeric complexes.</text>
</comment>
<comment type="subcellular location">
    <subcellularLocation>
        <location evidence="1">Plastid</location>
        <location evidence="1">Chloroplast thylakoid membrane</location>
        <topology evidence="1">Single-pass membrane protein</topology>
    </subcellularLocation>
</comment>
<comment type="similarity">
    <text evidence="1">Belongs to the PsbL family.</text>
</comment>
<sequence length="38" mass="4497">MTQSNPNEQNVELNRTSLYWGLLLIFVLAVLFSNYFFN</sequence>
<accession>Q7H8K6</accession>
<geneLocation type="chloroplast"/>
<keyword id="KW-0150">Chloroplast</keyword>
<keyword id="KW-0472">Membrane</keyword>
<keyword id="KW-0602">Photosynthesis</keyword>
<keyword id="KW-0604">Photosystem II</keyword>
<keyword id="KW-0934">Plastid</keyword>
<keyword id="KW-0674">Reaction center</keyword>
<keyword id="KW-0793">Thylakoid</keyword>
<keyword id="KW-0812">Transmembrane</keyword>
<keyword id="KW-1133">Transmembrane helix</keyword>
<dbReference type="EMBL" id="AY100857">
    <property type="protein sequence ID" value="AAM55551.1"/>
    <property type="molecule type" value="Genomic_DNA"/>
</dbReference>
<dbReference type="SMR" id="Q7H8K6"/>
<dbReference type="GO" id="GO:0009535">
    <property type="term" value="C:chloroplast thylakoid membrane"/>
    <property type="evidence" value="ECO:0007669"/>
    <property type="project" value="UniProtKB-SubCell"/>
</dbReference>
<dbReference type="GO" id="GO:0009539">
    <property type="term" value="C:photosystem II reaction center"/>
    <property type="evidence" value="ECO:0007669"/>
    <property type="project" value="InterPro"/>
</dbReference>
<dbReference type="GO" id="GO:0015979">
    <property type="term" value="P:photosynthesis"/>
    <property type="evidence" value="ECO:0007669"/>
    <property type="project" value="UniProtKB-UniRule"/>
</dbReference>
<dbReference type="HAMAP" id="MF_01317">
    <property type="entry name" value="PSII_PsbL"/>
    <property type="match status" value="1"/>
</dbReference>
<dbReference type="InterPro" id="IPR003372">
    <property type="entry name" value="PSII_PsbL"/>
</dbReference>
<dbReference type="InterPro" id="IPR037266">
    <property type="entry name" value="PSII_PsbL_sf"/>
</dbReference>
<dbReference type="NCBIfam" id="NF001972">
    <property type="entry name" value="PRK00753.1"/>
    <property type="match status" value="1"/>
</dbReference>
<dbReference type="Pfam" id="PF02419">
    <property type="entry name" value="PsbL"/>
    <property type="match status" value="1"/>
</dbReference>
<dbReference type="SUPFAM" id="SSF161017">
    <property type="entry name" value="Photosystem II reaction center protein L, PsbL"/>
    <property type="match status" value="1"/>
</dbReference>
<name>PSBL_IPOSE</name>
<proteinExistence type="inferred from homology"/>
<evidence type="ECO:0000255" key="1">
    <source>
        <dbReference type="HAMAP-Rule" id="MF_01317"/>
    </source>
</evidence>
<reference key="1">
    <citation type="journal article" date="2002" name="Am. J. Bot.">
        <title>Monophyly of the Convolvulaceae and circumscription of their major lineages based on DNA sequences of multiple chloroplast loci.</title>
        <authorList>
            <person name="Stefanovic S."/>
            <person name="Krueger L."/>
            <person name="Olmstead R.G."/>
        </authorList>
        <dbReference type="AGRICOLA" id="IND23320510"/>
    </citation>
    <scope>NUCLEOTIDE SEQUENCE [GENOMIC DNA]</scope>
</reference>
<gene>
    <name evidence="1" type="primary">psbL</name>
</gene>
<organism>
    <name type="scientific">Ipomoea setosa</name>
    <name type="common">Brazilian morning glory</name>
    <dbReference type="NCBI Taxonomy" id="89662"/>
    <lineage>
        <taxon>Eukaryota</taxon>
        <taxon>Viridiplantae</taxon>
        <taxon>Streptophyta</taxon>
        <taxon>Embryophyta</taxon>
        <taxon>Tracheophyta</taxon>
        <taxon>Spermatophyta</taxon>
        <taxon>Magnoliopsida</taxon>
        <taxon>eudicotyledons</taxon>
        <taxon>Gunneridae</taxon>
        <taxon>Pentapetalae</taxon>
        <taxon>asterids</taxon>
        <taxon>lamiids</taxon>
        <taxon>Solanales</taxon>
        <taxon>Convolvulaceae</taxon>
        <taxon>Ipomoeeae</taxon>
        <taxon>Ipomoea</taxon>
    </lineage>
</organism>
<protein>
    <recommendedName>
        <fullName evidence="1">Photosystem II reaction center protein L</fullName>
        <shortName evidence="1">PSII-L</shortName>
    </recommendedName>
</protein>
<feature type="chain" id="PRO_0000219731" description="Photosystem II reaction center protein L">
    <location>
        <begin position="1"/>
        <end position="38"/>
    </location>
</feature>
<feature type="transmembrane region" description="Helical" evidence="1">
    <location>
        <begin position="17"/>
        <end position="37"/>
    </location>
</feature>